<keyword id="KW-0456">Lyase</keyword>
<keyword id="KW-0460">Magnesium</keyword>
<keyword id="KW-0464">Manganese</keyword>
<keyword id="KW-0479">Metal-binding</keyword>
<keyword id="KW-0686">Riboflavin biosynthesis</keyword>
<proteinExistence type="inferred from homology"/>
<protein>
    <recommendedName>
        <fullName>3,4-dihydroxy-2-butanone 4-phosphate synthase</fullName>
        <shortName>DHBP synthase</shortName>
        <ecNumber>4.1.99.12</ecNumber>
    </recommendedName>
</protein>
<accession>P51962</accession>
<dbReference type="EC" id="4.1.99.12"/>
<dbReference type="EMBL" id="L11391">
    <property type="protein sequence ID" value="AAA25629.1"/>
    <property type="molecule type" value="Genomic_DNA"/>
</dbReference>
<dbReference type="SMR" id="P51962"/>
<dbReference type="STRING" id="659.AYY26_10960"/>
<dbReference type="UniPathway" id="UPA00275">
    <property type="reaction ID" value="UER00399"/>
</dbReference>
<dbReference type="GO" id="GO:0005829">
    <property type="term" value="C:cytosol"/>
    <property type="evidence" value="ECO:0007669"/>
    <property type="project" value="TreeGrafter"/>
</dbReference>
<dbReference type="GO" id="GO:0008686">
    <property type="term" value="F:3,4-dihydroxy-2-butanone-4-phosphate synthase activity"/>
    <property type="evidence" value="ECO:0007669"/>
    <property type="project" value="UniProtKB-UniRule"/>
</dbReference>
<dbReference type="GO" id="GO:0003935">
    <property type="term" value="F:GTP cyclohydrolase II activity"/>
    <property type="evidence" value="ECO:0007669"/>
    <property type="project" value="TreeGrafter"/>
</dbReference>
<dbReference type="GO" id="GO:0000287">
    <property type="term" value="F:magnesium ion binding"/>
    <property type="evidence" value="ECO:0007669"/>
    <property type="project" value="UniProtKB-UniRule"/>
</dbReference>
<dbReference type="GO" id="GO:0030145">
    <property type="term" value="F:manganese ion binding"/>
    <property type="evidence" value="ECO:0007669"/>
    <property type="project" value="UniProtKB-UniRule"/>
</dbReference>
<dbReference type="GO" id="GO:0009231">
    <property type="term" value="P:riboflavin biosynthetic process"/>
    <property type="evidence" value="ECO:0007669"/>
    <property type="project" value="UniProtKB-UniRule"/>
</dbReference>
<dbReference type="FunFam" id="3.90.870.10:FF:000001">
    <property type="entry name" value="Riboflavin biosynthesis protein RibBA"/>
    <property type="match status" value="1"/>
</dbReference>
<dbReference type="Gene3D" id="3.90.870.10">
    <property type="entry name" value="DHBP synthase"/>
    <property type="match status" value="1"/>
</dbReference>
<dbReference type="Gene3D" id="3.40.50.10990">
    <property type="entry name" value="GTP cyclohydrolase II"/>
    <property type="match status" value="1"/>
</dbReference>
<dbReference type="HAMAP" id="MF_00180">
    <property type="entry name" value="RibB"/>
    <property type="match status" value="1"/>
</dbReference>
<dbReference type="InterPro" id="IPR017945">
    <property type="entry name" value="DHBP_synth_RibB-like_a/b_dom"/>
</dbReference>
<dbReference type="InterPro" id="IPR000422">
    <property type="entry name" value="DHBP_synthase_RibB"/>
</dbReference>
<dbReference type="InterPro" id="IPR032677">
    <property type="entry name" value="GTP_cyclohydro_II"/>
</dbReference>
<dbReference type="InterPro" id="IPR036144">
    <property type="entry name" value="RibA-like_sf"/>
</dbReference>
<dbReference type="NCBIfam" id="NF010626">
    <property type="entry name" value="PRK14019.1"/>
    <property type="match status" value="1"/>
</dbReference>
<dbReference type="NCBIfam" id="TIGR00506">
    <property type="entry name" value="ribB"/>
    <property type="match status" value="1"/>
</dbReference>
<dbReference type="PANTHER" id="PTHR21327:SF34">
    <property type="entry name" value="3,4-DIHYDROXY-2-BUTANONE 4-PHOSPHATE SYNTHASE"/>
    <property type="match status" value="1"/>
</dbReference>
<dbReference type="PANTHER" id="PTHR21327">
    <property type="entry name" value="GTP CYCLOHYDROLASE II-RELATED"/>
    <property type="match status" value="1"/>
</dbReference>
<dbReference type="Pfam" id="PF00926">
    <property type="entry name" value="DHBP_synthase"/>
    <property type="match status" value="1"/>
</dbReference>
<dbReference type="Pfam" id="PF00925">
    <property type="entry name" value="GTP_cyclohydro2"/>
    <property type="match status" value="1"/>
</dbReference>
<dbReference type="PIRSF" id="PIRSF001259">
    <property type="entry name" value="RibA"/>
    <property type="match status" value="1"/>
</dbReference>
<dbReference type="SUPFAM" id="SSF142695">
    <property type="entry name" value="RibA-like"/>
    <property type="match status" value="1"/>
</dbReference>
<dbReference type="SUPFAM" id="SSF55821">
    <property type="entry name" value="YrdC/RibB"/>
    <property type="match status" value="1"/>
</dbReference>
<feature type="chain" id="PRO_0000151822" description="3,4-dihydroxy-2-butanone 4-phosphate synthase">
    <location>
        <begin position="1"/>
        <end position="363"/>
    </location>
</feature>
<feature type="region of interest" description="DHBP synthase">
    <location>
        <begin position="1"/>
        <end position="201"/>
    </location>
</feature>
<feature type="region of interest" description="GTP cyclohydrolase II-like">
    <location>
        <begin position="202"/>
        <end position="363"/>
    </location>
</feature>
<feature type="binding site" evidence="1">
    <location>
        <begin position="27"/>
        <end position="28"/>
    </location>
    <ligand>
        <name>D-ribulose 5-phosphate</name>
        <dbReference type="ChEBI" id="CHEBI:58121"/>
    </ligand>
</feature>
<feature type="binding site" evidence="1">
    <location>
        <position position="28"/>
    </location>
    <ligand>
        <name>Mg(2+)</name>
        <dbReference type="ChEBI" id="CHEBI:18420"/>
        <label>1</label>
    </ligand>
</feature>
<feature type="binding site" evidence="1">
    <location>
        <position position="28"/>
    </location>
    <ligand>
        <name>Mg(2+)</name>
        <dbReference type="ChEBI" id="CHEBI:18420"/>
        <label>2</label>
    </ligand>
</feature>
<feature type="binding site" evidence="1">
    <location>
        <position position="32"/>
    </location>
    <ligand>
        <name>D-ribulose 5-phosphate</name>
        <dbReference type="ChEBI" id="CHEBI:58121"/>
    </ligand>
</feature>
<feature type="binding site" evidence="1">
    <location>
        <begin position="140"/>
        <end position="144"/>
    </location>
    <ligand>
        <name>D-ribulose 5-phosphate</name>
        <dbReference type="ChEBI" id="CHEBI:58121"/>
    </ligand>
</feature>
<feature type="binding site" evidence="1">
    <location>
        <position position="143"/>
    </location>
    <ligand>
        <name>Mg(2+)</name>
        <dbReference type="ChEBI" id="CHEBI:18420"/>
        <label>2</label>
    </ligand>
</feature>
<feature type="binding site" evidence="1">
    <location>
        <position position="164"/>
    </location>
    <ligand>
        <name>D-ribulose 5-phosphate</name>
        <dbReference type="ChEBI" id="CHEBI:58121"/>
    </ligand>
</feature>
<feature type="site" description="Essential for catalytic activity" evidence="1">
    <location>
        <position position="126"/>
    </location>
</feature>
<feature type="site" description="Essential for catalytic activity" evidence="1">
    <location>
        <position position="164"/>
    </location>
</feature>
<organism>
    <name type="scientific">Photobacterium phosphoreum</name>
    <dbReference type="NCBI Taxonomy" id="659"/>
    <lineage>
        <taxon>Bacteria</taxon>
        <taxon>Pseudomonadati</taxon>
        <taxon>Pseudomonadota</taxon>
        <taxon>Gammaproteobacteria</taxon>
        <taxon>Vibrionales</taxon>
        <taxon>Vibrionaceae</taxon>
        <taxon>Photobacterium</taxon>
    </lineage>
</organism>
<gene>
    <name type="primary">ribB</name>
</gene>
<evidence type="ECO:0000250" key="1"/>
<evidence type="ECO:0000305" key="2"/>
<reference key="1">
    <citation type="journal article" date="1994" name="J. Bacteriol.">
        <title>Riboflavin synthesis genes are linked with the lux operon of Photobacterium phosphoreum.</title>
        <authorList>
            <person name="Lee C.Y."/>
            <person name="O'Kane D.J."/>
            <person name="Meighen E.A."/>
        </authorList>
    </citation>
    <scope>NUCLEOTIDE SEQUENCE [GENOMIC DNA]</scope>
    <source>
        <strain>DSM 2167 / CIP 104260 / LMG 4231 / NCIMB 844</strain>
    </source>
</reference>
<sequence>MTLSTAQEIIEDIHQGKMVILMDDEDRENEGDLIIASDKVTPEAINFMATYGRGLICLTLNKERCLQLELPMMVKSNTDKFATPFTISIEAASGVTTGISVNDRARTVQAAIAATATAKDIVMPGHIFPLMAQDGGVLARAGHTEAGCDVARLAGLEPSSVIVEILNDDGTMARRPQLEVFAKKHGLKLGTVADLIEYRNKYETMIERISECKLNTEFGEFDMITYRDKINHQIHYALQKGNIEPNSQTLVRVHLQDTFKDILQTGSTRWTLPAAMERISSENGVLVIVTKQEDPEMVISKIQNLALENKETPVVNSQSRQVGLGSQILSDLGIRKMRLLSSSSHLYHSLSGFGLEIVEYVCS</sequence>
<comment type="function">
    <text evidence="1">Catalyzes the conversion of D-ribulose 5-phosphate to formate and 3,4-dihydroxy-2-butanone 4-phosphate.</text>
</comment>
<comment type="catalytic activity">
    <reaction>
        <text>D-ribulose 5-phosphate = (2S)-2-hydroxy-3-oxobutyl phosphate + formate + H(+)</text>
        <dbReference type="Rhea" id="RHEA:18457"/>
        <dbReference type="ChEBI" id="CHEBI:15378"/>
        <dbReference type="ChEBI" id="CHEBI:15740"/>
        <dbReference type="ChEBI" id="CHEBI:58121"/>
        <dbReference type="ChEBI" id="CHEBI:58830"/>
        <dbReference type="EC" id="4.1.99.12"/>
    </reaction>
</comment>
<comment type="cofactor">
    <cofactor evidence="1">
        <name>Mg(2+)</name>
        <dbReference type="ChEBI" id="CHEBI:18420"/>
    </cofactor>
    <cofactor evidence="1">
        <name>Mn(2+)</name>
        <dbReference type="ChEBI" id="CHEBI:29035"/>
    </cofactor>
    <text evidence="1">Binds 2 divalent metal cations per subunit. Magnesium or manganese.</text>
</comment>
<comment type="pathway">
    <text>Cofactor biosynthesis; riboflavin biosynthesis; 2-hydroxy-3-oxobutyl phosphate from D-ribulose 5-phosphate: step 1/1.</text>
</comment>
<comment type="similarity">
    <text evidence="2">In the N-terminal section; belongs to the DHBP synthase family.</text>
</comment>
<comment type="similarity">
    <text evidence="2">In the C-terminal section; belongs to the GTP cyclohydrolase II family.</text>
</comment>
<name>RIBB_PHOPO</name>